<keyword id="KW-0067">ATP-binding</keyword>
<keyword id="KW-0131">Cell cycle</keyword>
<keyword id="KW-0966">Cell projection</keyword>
<keyword id="KW-0963">Cytoplasm</keyword>
<keyword id="KW-0903">Direct protein sequencing</keyword>
<keyword id="KW-0418">Kinase</keyword>
<keyword id="KW-0460">Magnesium</keyword>
<keyword id="KW-0479">Metal-binding</keyword>
<keyword id="KW-0546">Nucleotide metabolism</keyword>
<keyword id="KW-0547">Nucleotide-binding</keyword>
<keyword id="KW-0539">Nucleus</keyword>
<keyword id="KW-0597">Phosphoprotein</keyword>
<keyword id="KW-0808">Transferase</keyword>
<comment type="function">
    <text evidence="1">Major role in the synthesis of nucleoside triphosphates other than ATP.</text>
</comment>
<comment type="catalytic activity">
    <reaction evidence="1 4">
        <text>a 2'-deoxyribonucleoside 5'-diphosphate + ATP = a 2'-deoxyribonucleoside 5'-triphosphate + ADP</text>
        <dbReference type="Rhea" id="RHEA:44640"/>
        <dbReference type="ChEBI" id="CHEBI:30616"/>
        <dbReference type="ChEBI" id="CHEBI:61560"/>
        <dbReference type="ChEBI" id="CHEBI:73316"/>
        <dbReference type="ChEBI" id="CHEBI:456216"/>
        <dbReference type="EC" id="2.7.4.6"/>
    </reaction>
</comment>
<comment type="catalytic activity">
    <reaction evidence="1 4">
        <text>a ribonucleoside 5'-diphosphate + ATP = a ribonucleoside 5'-triphosphate + ADP</text>
        <dbReference type="Rhea" id="RHEA:18113"/>
        <dbReference type="ChEBI" id="CHEBI:30616"/>
        <dbReference type="ChEBI" id="CHEBI:57930"/>
        <dbReference type="ChEBI" id="CHEBI:61557"/>
        <dbReference type="ChEBI" id="CHEBI:456216"/>
        <dbReference type="EC" id="2.7.4.6"/>
    </reaction>
</comment>
<comment type="cofactor">
    <cofactor evidence="1">
        <name>Mg(2+)</name>
        <dbReference type="ChEBI" id="CHEBI:18420"/>
    </cofactor>
</comment>
<comment type="subcellular location">
    <subcellularLocation>
        <location evidence="2">Cytoplasm</location>
    </subcellularLocation>
    <subcellularLocation>
        <location evidence="2">Nucleus</location>
    </subcellularLocation>
    <subcellularLocation>
        <location evidence="2">Cell projection</location>
        <location evidence="2">Lamellipodium</location>
    </subcellularLocation>
    <subcellularLocation>
        <location evidence="2">Cell projection</location>
        <location evidence="2">Ruffle</location>
    </subcellularLocation>
</comment>
<comment type="similarity">
    <text evidence="3">Belongs to the NDK family.</text>
</comment>
<dbReference type="EC" id="2.7.4.6"/>
<dbReference type="SMR" id="P85280"/>
<dbReference type="BRENDA" id="2.7.4.6">
    <property type="organism ID" value="10447"/>
</dbReference>
<dbReference type="GO" id="GO:0005737">
    <property type="term" value="C:cytoplasm"/>
    <property type="evidence" value="ECO:0007669"/>
    <property type="project" value="UniProtKB-SubCell"/>
</dbReference>
<dbReference type="GO" id="GO:0030027">
    <property type="term" value="C:lamellipodium"/>
    <property type="evidence" value="ECO:0007669"/>
    <property type="project" value="UniProtKB-SubCell"/>
</dbReference>
<dbReference type="GO" id="GO:0005634">
    <property type="term" value="C:nucleus"/>
    <property type="evidence" value="ECO:0007669"/>
    <property type="project" value="UniProtKB-SubCell"/>
</dbReference>
<dbReference type="GO" id="GO:0001726">
    <property type="term" value="C:ruffle"/>
    <property type="evidence" value="ECO:0007669"/>
    <property type="project" value="UniProtKB-SubCell"/>
</dbReference>
<dbReference type="GO" id="GO:0005524">
    <property type="term" value="F:ATP binding"/>
    <property type="evidence" value="ECO:0007669"/>
    <property type="project" value="UniProtKB-KW"/>
</dbReference>
<dbReference type="GO" id="GO:0046872">
    <property type="term" value="F:metal ion binding"/>
    <property type="evidence" value="ECO:0007669"/>
    <property type="project" value="UniProtKB-KW"/>
</dbReference>
<dbReference type="GO" id="GO:0004550">
    <property type="term" value="F:nucleoside diphosphate kinase activity"/>
    <property type="evidence" value="ECO:0007669"/>
    <property type="project" value="UniProtKB-EC"/>
</dbReference>
<dbReference type="GO" id="GO:0006241">
    <property type="term" value="P:CTP biosynthetic process"/>
    <property type="evidence" value="ECO:0007669"/>
    <property type="project" value="InterPro"/>
</dbReference>
<dbReference type="GO" id="GO:0006183">
    <property type="term" value="P:GTP biosynthetic process"/>
    <property type="evidence" value="ECO:0007669"/>
    <property type="project" value="InterPro"/>
</dbReference>
<dbReference type="GO" id="GO:0006228">
    <property type="term" value="P:UTP biosynthetic process"/>
    <property type="evidence" value="ECO:0007669"/>
    <property type="project" value="InterPro"/>
</dbReference>
<dbReference type="CDD" id="cd04413">
    <property type="entry name" value="NDPk_I"/>
    <property type="match status" value="1"/>
</dbReference>
<dbReference type="FunFam" id="3.30.70.141:FF:000039">
    <property type="entry name" value="Nucleoside diphosphate kinase B"/>
    <property type="match status" value="1"/>
</dbReference>
<dbReference type="Gene3D" id="3.30.70.141">
    <property type="entry name" value="Nucleoside diphosphate kinase-like domain"/>
    <property type="match status" value="1"/>
</dbReference>
<dbReference type="InterPro" id="IPR034907">
    <property type="entry name" value="NDK-like_dom"/>
</dbReference>
<dbReference type="InterPro" id="IPR036850">
    <property type="entry name" value="NDK-like_dom_sf"/>
</dbReference>
<dbReference type="InterPro" id="IPR001564">
    <property type="entry name" value="Nucleoside_diP_kinase"/>
</dbReference>
<dbReference type="PANTHER" id="PTHR11349">
    <property type="entry name" value="NUCLEOSIDE DIPHOSPHATE KINASE"/>
    <property type="match status" value="1"/>
</dbReference>
<dbReference type="Pfam" id="PF00334">
    <property type="entry name" value="NDK"/>
    <property type="match status" value="1"/>
</dbReference>
<dbReference type="PRINTS" id="PR01243">
    <property type="entry name" value="NUCDPKINASE"/>
</dbReference>
<dbReference type="SMART" id="SM00562">
    <property type="entry name" value="NDK"/>
    <property type="match status" value="1"/>
</dbReference>
<dbReference type="SUPFAM" id="SSF54919">
    <property type="entry name" value="Nucleoside diphosphate kinase, NDK"/>
    <property type="match status" value="1"/>
</dbReference>
<dbReference type="PROSITE" id="PS51374">
    <property type="entry name" value="NDPK_LIKE"/>
    <property type="match status" value="1"/>
</dbReference>
<protein>
    <recommendedName>
        <fullName>Nucleoside diphosphate kinase B</fullName>
        <shortName>NDK B</shortName>
        <shortName>NDP kinase B</shortName>
        <ecNumber>2.7.4.6</ecNumber>
    </recommendedName>
</protein>
<name>NDKB_MERME</name>
<feature type="chain" id="PRO_0000306190" description="Nucleoside diphosphate kinase B">
    <location>
        <begin position="1" status="less than"/>
        <end position="126"/>
    </location>
</feature>
<feature type="active site" description="Pros-phosphohistidine intermediate" evidence="1 4">
    <location>
        <position position="92"/>
    </location>
</feature>
<feature type="binding site" evidence="1">
    <location>
        <position position="6"/>
    </location>
    <ligand>
        <name>ATP</name>
        <dbReference type="ChEBI" id="CHEBI:30616"/>
    </ligand>
</feature>
<feature type="binding site" evidence="1">
    <location>
        <position position="37"/>
    </location>
    <ligand>
        <name>ATP</name>
        <dbReference type="ChEBI" id="CHEBI:30616"/>
    </ligand>
</feature>
<feature type="binding site" evidence="1">
    <location>
        <position position="68"/>
    </location>
    <ligand>
        <name>ATP</name>
        <dbReference type="ChEBI" id="CHEBI:30616"/>
    </ligand>
</feature>
<feature type="binding site" evidence="1">
    <location>
        <position position="79"/>
    </location>
    <ligand>
        <name>ATP</name>
        <dbReference type="ChEBI" id="CHEBI:30616"/>
    </ligand>
</feature>
<feature type="binding site" evidence="1">
    <location>
        <position position="89"/>
    </location>
    <ligand>
        <name>ATP</name>
        <dbReference type="ChEBI" id="CHEBI:30616"/>
    </ligand>
</feature>
<feature type="non-consecutive residues" evidence="6">
    <location>
        <begin position="20"/>
        <end position="21"/>
    </location>
</feature>
<feature type="non-consecutive residues" evidence="6">
    <location>
        <begin position="24"/>
        <end position="25"/>
    </location>
</feature>
<feature type="non-consecutive residues" evidence="6">
    <location>
        <begin position="62"/>
        <end position="63"/>
    </location>
</feature>
<feature type="non-terminal residue" evidence="6">
    <location>
        <position position="1"/>
    </location>
</feature>
<gene>
    <name type="primary">nme2</name>
</gene>
<organism>
    <name type="scientific">Merluccius merluccius</name>
    <name type="common">European hake</name>
    <dbReference type="NCBI Taxonomy" id="8063"/>
    <lineage>
        <taxon>Eukaryota</taxon>
        <taxon>Metazoa</taxon>
        <taxon>Chordata</taxon>
        <taxon>Craniata</taxon>
        <taxon>Vertebrata</taxon>
        <taxon>Euteleostomi</taxon>
        <taxon>Actinopterygii</taxon>
        <taxon>Neopterygii</taxon>
        <taxon>Teleostei</taxon>
        <taxon>Neoteleostei</taxon>
        <taxon>Acanthomorphata</taxon>
        <taxon>Zeiogadaria</taxon>
        <taxon>Gadariae</taxon>
        <taxon>Gadiformes</taxon>
        <taxon>Gadoidei</taxon>
        <taxon>Merlucciidae</taxon>
        <taxon>Merluccius</taxon>
    </lineage>
</organism>
<proteinExistence type="evidence at protein level"/>
<accession>P85280</accession>
<sequence length="126" mass="14207">TFVAIKPDGVQRGLCGEVMKFIQPMKQHYLDLKDMPFYAGLCKYMSSGPVFAMVWEGEGIVKMMLGETNPADSKPGSIRGDFCINIGRNIIHGSDTVENAKMEVALWFKPEEFVTYTEKAKAWVYE</sequence>
<evidence type="ECO:0000250" key="1">
    <source>
        <dbReference type="UniProtKB" id="P15531"/>
    </source>
</evidence>
<evidence type="ECO:0000250" key="2">
    <source>
        <dbReference type="UniProtKB" id="P22392"/>
    </source>
</evidence>
<evidence type="ECO:0000255" key="3"/>
<evidence type="ECO:0000255" key="4">
    <source>
        <dbReference type="PROSITE-ProRule" id="PRU10030"/>
    </source>
</evidence>
<evidence type="ECO:0000269" key="5">
    <source>
    </source>
</evidence>
<evidence type="ECO:0000303" key="6">
    <source>
    </source>
</evidence>
<evidence type="ECO:0000305" key="7"/>
<reference evidence="7" key="1">
    <citation type="journal article" date="2007" name="J. Proteome Res.">
        <title>De novo mass spectrometry sequencing and characterization of species-specific peptides from nucleoside diphosphate kinase B for the classification of commercial fish species belonging to the family Merlucciidae.</title>
        <authorList>
            <person name="Carrera M."/>
            <person name="Canas B."/>
            <person name="Pineiro C."/>
            <person name="Vazquez J."/>
            <person name="Gallardo J.M."/>
        </authorList>
    </citation>
    <scope>PROTEIN SEQUENCE</scope>
    <source>
        <tissue evidence="5">White muscle</tissue>
    </source>
</reference>